<sequence length="424" mass="48616">MRLSNYYIPTLKETSADVSVVSHKYSIRAGLIKQIASGIYTWLPLGLRVLRNIENIVREEMNKSGALEVLMPLIQPASLWKESGRYDDYGSEMLRITDRNQREMLFGPTHEEVITDTLRTTLTSHKNLPITLYQIQWKFRDELRPRYGIMRCREFLMKDAYSFDKDLSGAILSYNLMFKTYIKIFKNLGLTPIAVKAESGPIGGNLSHEFHVLANSGESTLYYDQEIIELMNSDNIDIERIKNTYTAADDMHDPQTCPIPPNNIKTSKGIEIGHIFYLGDKYSKPMNANFCDNNDSKPLQMGCYGIGISRLVAAIIEVFHDNKGITWPEEISPFKFSLVNLYSSNDKCIKVAENLHMQLHNDVLYDDTDDSPGIKLTRTDLLGMPWQIIIGKSTVEQDLIEVRNRSNKDKFLISVEQFLKKFKK</sequence>
<comment type="function">
    <text evidence="1">Catalyzes the attachment of proline to tRNA(Pro) in a two-step reaction: proline is first activated by ATP to form Pro-AMP and then transferred to the acceptor end of tRNA(Pro).</text>
</comment>
<comment type="catalytic activity">
    <reaction evidence="1">
        <text>tRNA(Pro) + L-proline + ATP = L-prolyl-tRNA(Pro) + AMP + diphosphate</text>
        <dbReference type="Rhea" id="RHEA:14305"/>
        <dbReference type="Rhea" id="RHEA-COMP:9700"/>
        <dbReference type="Rhea" id="RHEA-COMP:9702"/>
        <dbReference type="ChEBI" id="CHEBI:30616"/>
        <dbReference type="ChEBI" id="CHEBI:33019"/>
        <dbReference type="ChEBI" id="CHEBI:60039"/>
        <dbReference type="ChEBI" id="CHEBI:78442"/>
        <dbReference type="ChEBI" id="CHEBI:78532"/>
        <dbReference type="ChEBI" id="CHEBI:456215"/>
        <dbReference type="EC" id="6.1.1.15"/>
    </reaction>
</comment>
<comment type="subunit">
    <text evidence="1">Homodimer.</text>
</comment>
<comment type="subcellular location">
    <subcellularLocation>
        <location evidence="1">Cytoplasm</location>
    </subcellularLocation>
</comment>
<comment type="similarity">
    <text evidence="1">Belongs to the class-II aminoacyl-tRNA synthetase family. ProS type 2 subfamily.</text>
</comment>
<reference key="1">
    <citation type="journal article" date="2006" name="J. Bacteriol.">
        <title>The genome of the obligately intracellular bacterium Ehrlichia canis reveals themes of complex membrane structure and immune evasion strategies.</title>
        <authorList>
            <person name="Mavromatis K."/>
            <person name="Doyle C.K."/>
            <person name="Lykidis A."/>
            <person name="Ivanova N."/>
            <person name="Francino M.P."/>
            <person name="Chain P."/>
            <person name="Shin M."/>
            <person name="Malfatti S."/>
            <person name="Larimer F."/>
            <person name="Copeland A."/>
            <person name="Detter J.C."/>
            <person name="Land M."/>
            <person name="Richardson P.M."/>
            <person name="Yu X.J."/>
            <person name="Walker D.H."/>
            <person name="McBride J.W."/>
            <person name="Kyrpides N.C."/>
        </authorList>
    </citation>
    <scope>NUCLEOTIDE SEQUENCE [LARGE SCALE GENOMIC DNA]</scope>
    <source>
        <strain>Jake</strain>
    </source>
</reference>
<evidence type="ECO:0000255" key="1">
    <source>
        <dbReference type="HAMAP-Rule" id="MF_01570"/>
    </source>
</evidence>
<name>SYP_EHRCJ</name>
<accession>Q3YSD4</accession>
<dbReference type="EC" id="6.1.1.15" evidence="1"/>
<dbReference type="EMBL" id="CP000107">
    <property type="protein sequence ID" value="AAZ68371.1"/>
    <property type="molecule type" value="Genomic_DNA"/>
</dbReference>
<dbReference type="RefSeq" id="WP_011304449.1">
    <property type="nucleotide sequence ID" value="NC_007354.1"/>
</dbReference>
<dbReference type="SMR" id="Q3YSD4"/>
<dbReference type="FunCoup" id="Q3YSD4">
    <property type="interactions" value="319"/>
</dbReference>
<dbReference type="STRING" id="269484.Ecaj_0327"/>
<dbReference type="KEGG" id="ecn:Ecaj_0327"/>
<dbReference type="eggNOG" id="COG0442">
    <property type="taxonomic scope" value="Bacteria"/>
</dbReference>
<dbReference type="HOGENOM" id="CLU_016739_4_2_5"/>
<dbReference type="InParanoid" id="Q3YSD4"/>
<dbReference type="Proteomes" id="UP000000435">
    <property type="component" value="Chromosome"/>
</dbReference>
<dbReference type="GO" id="GO:0005829">
    <property type="term" value="C:cytosol"/>
    <property type="evidence" value="ECO:0007669"/>
    <property type="project" value="TreeGrafter"/>
</dbReference>
<dbReference type="GO" id="GO:0005524">
    <property type="term" value="F:ATP binding"/>
    <property type="evidence" value="ECO:0007669"/>
    <property type="project" value="UniProtKB-UniRule"/>
</dbReference>
<dbReference type="GO" id="GO:0004827">
    <property type="term" value="F:proline-tRNA ligase activity"/>
    <property type="evidence" value="ECO:0007669"/>
    <property type="project" value="UniProtKB-UniRule"/>
</dbReference>
<dbReference type="GO" id="GO:0006433">
    <property type="term" value="P:prolyl-tRNA aminoacylation"/>
    <property type="evidence" value="ECO:0007669"/>
    <property type="project" value="UniProtKB-UniRule"/>
</dbReference>
<dbReference type="CDD" id="cd00861">
    <property type="entry name" value="ProRS_anticodon_short"/>
    <property type="match status" value="1"/>
</dbReference>
<dbReference type="CDD" id="cd00779">
    <property type="entry name" value="ProRS_core_prok"/>
    <property type="match status" value="1"/>
</dbReference>
<dbReference type="FunFam" id="3.30.930.10:FF:000042">
    <property type="entry name" value="probable proline--tRNA ligase, mitochondrial"/>
    <property type="match status" value="1"/>
</dbReference>
<dbReference type="Gene3D" id="3.40.50.800">
    <property type="entry name" value="Anticodon-binding domain"/>
    <property type="match status" value="1"/>
</dbReference>
<dbReference type="Gene3D" id="3.30.930.10">
    <property type="entry name" value="Bira Bifunctional Protein, Domain 2"/>
    <property type="match status" value="1"/>
</dbReference>
<dbReference type="HAMAP" id="MF_01570">
    <property type="entry name" value="Pro_tRNA_synth_type2"/>
    <property type="match status" value="1"/>
</dbReference>
<dbReference type="InterPro" id="IPR002314">
    <property type="entry name" value="aa-tRNA-synt_IIb"/>
</dbReference>
<dbReference type="InterPro" id="IPR006195">
    <property type="entry name" value="aa-tRNA-synth_II"/>
</dbReference>
<dbReference type="InterPro" id="IPR045864">
    <property type="entry name" value="aa-tRNA-synth_II/BPL/LPL"/>
</dbReference>
<dbReference type="InterPro" id="IPR004154">
    <property type="entry name" value="Anticodon-bd"/>
</dbReference>
<dbReference type="InterPro" id="IPR036621">
    <property type="entry name" value="Anticodon-bd_dom_sf"/>
</dbReference>
<dbReference type="InterPro" id="IPR002316">
    <property type="entry name" value="Pro-tRNA-ligase_IIa"/>
</dbReference>
<dbReference type="InterPro" id="IPR004500">
    <property type="entry name" value="Pro-tRNA-synth_IIa_bac-type"/>
</dbReference>
<dbReference type="InterPro" id="IPR050062">
    <property type="entry name" value="Pro-tRNA_synthetase"/>
</dbReference>
<dbReference type="InterPro" id="IPR023716">
    <property type="entry name" value="Prolyl-tRNA_ligase_IIa_type2"/>
</dbReference>
<dbReference type="InterPro" id="IPR044140">
    <property type="entry name" value="ProRS_anticodon_short"/>
</dbReference>
<dbReference type="InterPro" id="IPR033730">
    <property type="entry name" value="ProRS_core_prok"/>
</dbReference>
<dbReference type="NCBIfam" id="NF008979">
    <property type="entry name" value="PRK12325.1"/>
    <property type="match status" value="1"/>
</dbReference>
<dbReference type="NCBIfam" id="TIGR00409">
    <property type="entry name" value="proS_fam_II"/>
    <property type="match status" value="1"/>
</dbReference>
<dbReference type="PANTHER" id="PTHR42753">
    <property type="entry name" value="MITOCHONDRIAL RIBOSOME PROTEIN L39/PROLYL-TRNA LIGASE FAMILY MEMBER"/>
    <property type="match status" value="1"/>
</dbReference>
<dbReference type="PANTHER" id="PTHR42753:SF2">
    <property type="entry name" value="PROLINE--TRNA LIGASE"/>
    <property type="match status" value="1"/>
</dbReference>
<dbReference type="Pfam" id="PF03129">
    <property type="entry name" value="HGTP_anticodon"/>
    <property type="match status" value="1"/>
</dbReference>
<dbReference type="Pfam" id="PF00587">
    <property type="entry name" value="tRNA-synt_2b"/>
    <property type="match status" value="1"/>
</dbReference>
<dbReference type="PRINTS" id="PR01046">
    <property type="entry name" value="TRNASYNTHPRO"/>
</dbReference>
<dbReference type="SUPFAM" id="SSF52954">
    <property type="entry name" value="Class II aaRS ABD-related"/>
    <property type="match status" value="1"/>
</dbReference>
<dbReference type="SUPFAM" id="SSF55681">
    <property type="entry name" value="Class II aaRS and biotin synthetases"/>
    <property type="match status" value="1"/>
</dbReference>
<dbReference type="PROSITE" id="PS50862">
    <property type="entry name" value="AA_TRNA_LIGASE_II"/>
    <property type="match status" value="1"/>
</dbReference>
<keyword id="KW-0030">Aminoacyl-tRNA synthetase</keyword>
<keyword id="KW-0067">ATP-binding</keyword>
<keyword id="KW-0963">Cytoplasm</keyword>
<keyword id="KW-0436">Ligase</keyword>
<keyword id="KW-0547">Nucleotide-binding</keyword>
<keyword id="KW-0648">Protein biosynthesis</keyword>
<gene>
    <name evidence="1" type="primary">proS</name>
    <name type="ordered locus">Ecaj_0327</name>
</gene>
<proteinExistence type="inferred from homology"/>
<feature type="chain" id="PRO_0000248897" description="Proline--tRNA ligase">
    <location>
        <begin position="1"/>
        <end position="424"/>
    </location>
</feature>
<organism>
    <name type="scientific">Ehrlichia canis (strain Jake)</name>
    <dbReference type="NCBI Taxonomy" id="269484"/>
    <lineage>
        <taxon>Bacteria</taxon>
        <taxon>Pseudomonadati</taxon>
        <taxon>Pseudomonadota</taxon>
        <taxon>Alphaproteobacteria</taxon>
        <taxon>Rickettsiales</taxon>
        <taxon>Anaplasmataceae</taxon>
        <taxon>Ehrlichia</taxon>
    </lineage>
</organism>
<protein>
    <recommendedName>
        <fullName evidence="1">Proline--tRNA ligase</fullName>
        <ecNumber evidence="1">6.1.1.15</ecNumber>
    </recommendedName>
    <alternativeName>
        <fullName evidence="1">Prolyl-tRNA synthetase</fullName>
        <shortName evidence="1">ProRS</shortName>
    </alternativeName>
</protein>